<feature type="chain" id="PRO_1000069535" description="NAD-dependent malic enzyme">
    <location>
        <begin position="1"/>
        <end position="560"/>
    </location>
</feature>
<feature type="active site" description="Proton donor" evidence="1">
    <location>
        <position position="100"/>
    </location>
</feature>
<feature type="active site" description="Proton acceptor" evidence="1">
    <location>
        <position position="171"/>
    </location>
</feature>
<feature type="binding site" evidence="1">
    <location>
        <position position="153"/>
    </location>
    <ligand>
        <name>NAD(+)</name>
        <dbReference type="ChEBI" id="CHEBI:57540"/>
    </ligand>
</feature>
<feature type="binding site" evidence="1">
    <location>
        <position position="242"/>
    </location>
    <ligand>
        <name>a divalent metal cation</name>
        <dbReference type="ChEBI" id="CHEBI:60240"/>
    </ligand>
</feature>
<feature type="binding site" evidence="1">
    <location>
        <position position="243"/>
    </location>
    <ligand>
        <name>a divalent metal cation</name>
        <dbReference type="ChEBI" id="CHEBI:60240"/>
    </ligand>
</feature>
<feature type="binding site" evidence="1">
    <location>
        <position position="266"/>
    </location>
    <ligand>
        <name>a divalent metal cation</name>
        <dbReference type="ChEBI" id="CHEBI:60240"/>
    </ligand>
</feature>
<feature type="binding site" evidence="1">
    <location>
        <position position="266"/>
    </location>
    <ligand>
        <name>NAD(+)</name>
        <dbReference type="ChEBI" id="CHEBI:57540"/>
    </ligand>
</feature>
<feature type="binding site" evidence="1">
    <location>
        <position position="413"/>
    </location>
    <ligand>
        <name>NAD(+)</name>
        <dbReference type="ChEBI" id="CHEBI:57540"/>
    </ligand>
</feature>
<feature type="site" description="Important for activity" evidence="1">
    <location>
        <position position="266"/>
    </location>
</feature>
<protein>
    <recommendedName>
        <fullName evidence="1">NAD-dependent malic enzyme</fullName>
        <shortName evidence="1">NAD-ME</shortName>
        <ecNumber evidence="1">1.1.1.38</ecNumber>
    </recommendedName>
</protein>
<sequence>MLNQRPLYIPFAGPALLETPLLNKGSAFSSEERDSFNLTGLLPHNIETIEEQSSRAYLQLRSFTSDMDKHIYLRNIQDTNETLFHHLIEQHIEEVMPLIYTPTVGQACEKFSQIYRRKRGLFISYPERHKIDDMLQNATKQNVKVIVVTDGERILGLGDQGIGGMGIPIGKLALYTACGGISPAYCLPILLDVGTNNQQLLDDPMYMGWRNPRISGDEYNEFVDLFIQAVKRRWPEVLLQFEDFAQENATPLLNKYRDQLCCFNDDIQGTAAVSVGTLIAACLNKSQKLSQQNIAFLGAGSAGCGIAEHIIRQMQREGLTEEQARRQVFMVDRYGLLTDSMTELQKFQTPLVQKESDIEHWDKSQKLGLAQVVKQARITVLFGVSGQKGLFTQEVVEALCANTEHPIVLPLSNPTSRVEATPQEVTNWSRGKAIVATGSPFPNTTFEGQSYEVSQCNNSYIFPGIGLGVLAARATGISDNMLTAASQALADISVEYEKAPGAILPPIKFIREISEKIAYAVALQAIEDKLALPVTAENLERRLKANFWLPKYRDYRRTSF</sequence>
<dbReference type="EC" id="1.1.1.38" evidence="1"/>
<dbReference type="EMBL" id="CP000323">
    <property type="protein sequence ID" value="ABE74763.1"/>
    <property type="molecule type" value="Genomic_DNA"/>
</dbReference>
<dbReference type="RefSeq" id="WP_011513323.1">
    <property type="nucleotide sequence ID" value="NC_007969.1"/>
</dbReference>
<dbReference type="SMR" id="Q1QC40"/>
<dbReference type="STRING" id="335284.Pcryo_0982"/>
<dbReference type="KEGG" id="pcr:Pcryo_0982"/>
<dbReference type="eggNOG" id="COG0281">
    <property type="taxonomic scope" value="Bacteria"/>
</dbReference>
<dbReference type="HOGENOM" id="CLU_011405_5_2_6"/>
<dbReference type="Proteomes" id="UP000002425">
    <property type="component" value="Chromosome"/>
</dbReference>
<dbReference type="GO" id="GO:0005829">
    <property type="term" value="C:cytosol"/>
    <property type="evidence" value="ECO:0007669"/>
    <property type="project" value="TreeGrafter"/>
</dbReference>
<dbReference type="GO" id="GO:0004471">
    <property type="term" value="F:malate dehydrogenase (decarboxylating) (NAD+) activity"/>
    <property type="evidence" value="ECO:0007669"/>
    <property type="project" value="UniProtKB-UniRule"/>
</dbReference>
<dbReference type="GO" id="GO:0046872">
    <property type="term" value="F:metal ion binding"/>
    <property type="evidence" value="ECO:0007669"/>
    <property type="project" value="UniProtKB-KW"/>
</dbReference>
<dbReference type="GO" id="GO:0051287">
    <property type="term" value="F:NAD binding"/>
    <property type="evidence" value="ECO:0007669"/>
    <property type="project" value="InterPro"/>
</dbReference>
<dbReference type="GO" id="GO:0008948">
    <property type="term" value="F:oxaloacetate decarboxylase activity"/>
    <property type="evidence" value="ECO:0007669"/>
    <property type="project" value="UniProtKB-UniRule"/>
</dbReference>
<dbReference type="GO" id="GO:0006108">
    <property type="term" value="P:malate metabolic process"/>
    <property type="evidence" value="ECO:0007669"/>
    <property type="project" value="TreeGrafter"/>
</dbReference>
<dbReference type="CDD" id="cd05312">
    <property type="entry name" value="NAD_bind_1_malic_enz"/>
    <property type="match status" value="1"/>
</dbReference>
<dbReference type="FunFam" id="3.40.50.10380:FF:000001">
    <property type="entry name" value="NAD-dependent malic enzyme"/>
    <property type="match status" value="1"/>
</dbReference>
<dbReference type="Gene3D" id="3.40.50.10380">
    <property type="entry name" value="Malic enzyme, N-terminal domain"/>
    <property type="match status" value="1"/>
</dbReference>
<dbReference type="Gene3D" id="3.40.50.720">
    <property type="entry name" value="NAD(P)-binding Rossmann-like Domain"/>
    <property type="match status" value="1"/>
</dbReference>
<dbReference type="HAMAP" id="MF_01619">
    <property type="entry name" value="NAD_malic_enz"/>
    <property type="match status" value="1"/>
</dbReference>
<dbReference type="InterPro" id="IPR046346">
    <property type="entry name" value="Aminoacid_DH-like_N_sf"/>
</dbReference>
<dbReference type="InterPro" id="IPR015884">
    <property type="entry name" value="Malic_enzyme_CS"/>
</dbReference>
<dbReference type="InterPro" id="IPR012301">
    <property type="entry name" value="Malic_N_dom"/>
</dbReference>
<dbReference type="InterPro" id="IPR037062">
    <property type="entry name" value="Malic_N_dom_sf"/>
</dbReference>
<dbReference type="InterPro" id="IPR012302">
    <property type="entry name" value="Malic_NAD-bd"/>
</dbReference>
<dbReference type="InterPro" id="IPR001891">
    <property type="entry name" value="Malic_OxRdtase"/>
</dbReference>
<dbReference type="InterPro" id="IPR036291">
    <property type="entry name" value="NAD(P)-bd_dom_sf"/>
</dbReference>
<dbReference type="InterPro" id="IPR023667">
    <property type="entry name" value="NAD_malic_enz_proteobac"/>
</dbReference>
<dbReference type="NCBIfam" id="NF010052">
    <property type="entry name" value="PRK13529.1"/>
    <property type="match status" value="1"/>
</dbReference>
<dbReference type="PANTHER" id="PTHR23406">
    <property type="entry name" value="MALIC ENZYME-RELATED"/>
    <property type="match status" value="1"/>
</dbReference>
<dbReference type="PANTHER" id="PTHR23406:SF34">
    <property type="entry name" value="NAD-DEPENDENT MALIC ENZYME, MITOCHONDRIAL"/>
    <property type="match status" value="1"/>
</dbReference>
<dbReference type="Pfam" id="PF00390">
    <property type="entry name" value="malic"/>
    <property type="match status" value="1"/>
</dbReference>
<dbReference type="Pfam" id="PF03949">
    <property type="entry name" value="Malic_M"/>
    <property type="match status" value="1"/>
</dbReference>
<dbReference type="PIRSF" id="PIRSF000106">
    <property type="entry name" value="ME"/>
    <property type="match status" value="1"/>
</dbReference>
<dbReference type="PRINTS" id="PR00072">
    <property type="entry name" value="MALOXRDTASE"/>
</dbReference>
<dbReference type="SMART" id="SM01274">
    <property type="entry name" value="malic"/>
    <property type="match status" value="1"/>
</dbReference>
<dbReference type="SMART" id="SM00919">
    <property type="entry name" value="Malic_M"/>
    <property type="match status" value="1"/>
</dbReference>
<dbReference type="SUPFAM" id="SSF53223">
    <property type="entry name" value="Aminoacid dehydrogenase-like, N-terminal domain"/>
    <property type="match status" value="1"/>
</dbReference>
<dbReference type="SUPFAM" id="SSF51735">
    <property type="entry name" value="NAD(P)-binding Rossmann-fold domains"/>
    <property type="match status" value="1"/>
</dbReference>
<dbReference type="PROSITE" id="PS00331">
    <property type="entry name" value="MALIC_ENZYMES"/>
    <property type="match status" value="1"/>
</dbReference>
<reference key="1">
    <citation type="submission" date="2006-03" db="EMBL/GenBank/DDBJ databases">
        <title>Complete sequence of chromosome of Psychrobacter cryohalolentis K5.</title>
        <authorList>
            <consortium name="US DOE Joint Genome Institute"/>
            <person name="Copeland A."/>
            <person name="Lucas S."/>
            <person name="Lapidus A."/>
            <person name="Barry K."/>
            <person name="Detter J.C."/>
            <person name="Glavina T."/>
            <person name="Hammon N."/>
            <person name="Israni S."/>
            <person name="Dalin E."/>
            <person name="Tice H."/>
            <person name="Pitluck S."/>
            <person name="Brettin T."/>
            <person name="Bruce D."/>
            <person name="Han C."/>
            <person name="Tapia R."/>
            <person name="Sims D.R."/>
            <person name="Gilna P."/>
            <person name="Schmutz J."/>
            <person name="Larimer F."/>
            <person name="Land M."/>
            <person name="Hauser L."/>
            <person name="Kyrpides N."/>
            <person name="Kim E."/>
            <person name="Richardson P."/>
        </authorList>
    </citation>
    <scope>NUCLEOTIDE SEQUENCE [LARGE SCALE GENOMIC DNA]</scope>
    <source>
        <strain>ATCC BAA-1226 / DSM 17306 / VKM B-2378 / K5</strain>
    </source>
</reference>
<gene>
    <name evidence="1" type="primary">maeA</name>
    <name type="ordered locus">Pcryo_0982</name>
</gene>
<comment type="catalytic activity">
    <reaction evidence="1">
        <text>(S)-malate + NAD(+) = pyruvate + CO2 + NADH</text>
        <dbReference type="Rhea" id="RHEA:12653"/>
        <dbReference type="ChEBI" id="CHEBI:15361"/>
        <dbReference type="ChEBI" id="CHEBI:15589"/>
        <dbReference type="ChEBI" id="CHEBI:16526"/>
        <dbReference type="ChEBI" id="CHEBI:57540"/>
        <dbReference type="ChEBI" id="CHEBI:57945"/>
        <dbReference type="EC" id="1.1.1.38"/>
    </reaction>
</comment>
<comment type="catalytic activity">
    <reaction evidence="1">
        <text>oxaloacetate + H(+) = pyruvate + CO2</text>
        <dbReference type="Rhea" id="RHEA:15641"/>
        <dbReference type="ChEBI" id="CHEBI:15361"/>
        <dbReference type="ChEBI" id="CHEBI:15378"/>
        <dbReference type="ChEBI" id="CHEBI:16452"/>
        <dbReference type="ChEBI" id="CHEBI:16526"/>
        <dbReference type="EC" id="1.1.1.38"/>
    </reaction>
</comment>
<comment type="cofactor">
    <cofactor evidence="1">
        <name>Mg(2+)</name>
        <dbReference type="ChEBI" id="CHEBI:18420"/>
    </cofactor>
    <cofactor evidence="1">
        <name>Mn(2+)</name>
        <dbReference type="ChEBI" id="CHEBI:29035"/>
    </cofactor>
    <text evidence="1">Divalent metal cations. Prefers magnesium or manganese.</text>
</comment>
<comment type="subunit">
    <text evidence="1">Homotetramer.</text>
</comment>
<comment type="similarity">
    <text evidence="1">Belongs to the malic enzymes family.</text>
</comment>
<evidence type="ECO:0000255" key="1">
    <source>
        <dbReference type="HAMAP-Rule" id="MF_01619"/>
    </source>
</evidence>
<accession>Q1QC40</accession>
<proteinExistence type="inferred from homology"/>
<keyword id="KW-0479">Metal-binding</keyword>
<keyword id="KW-0520">NAD</keyword>
<keyword id="KW-0560">Oxidoreductase</keyword>
<organism>
    <name type="scientific">Psychrobacter cryohalolentis (strain ATCC BAA-1226 / DSM 17306 / VKM B-2378 / K5)</name>
    <dbReference type="NCBI Taxonomy" id="335284"/>
    <lineage>
        <taxon>Bacteria</taxon>
        <taxon>Pseudomonadati</taxon>
        <taxon>Pseudomonadota</taxon>
        <taxon>Gammaproteobacteria</taxon>
        <taxon>Moraxellales</taxon>
        <taxon>Moraxellaceae</taxon>
        <taxon>Psychrobacter</taxon>
    </lineage>
</organism>
<name>MAO1_PSYCK</name>